<accession>O25609</accession>
<accession>O30584</accession>
<accession>O30586</accession>
<organism>
    <name type="scientific">Helicobacter pylori (strain ATCC 700392 / 26695)</name>
    <name type="common">Campylobacter pylori</name>
    <dbReference type="NCBI Taxonomy" id="85962"/>
    <lineage>
        <taxon>Bacteria</taxon>
        <taxon>Pseudomonadati</taxon>
        <taxon>Campylobacterota</taxon>
        <taxon>Epsilonproteobacteria</taxon>
        <taxon>Campylobacterales</taxon>
        <taxon>Helicobacteraceae</taxon>
        <taxon>Helicobacter</taxon>
    </lineage>
</organism>
<comment type="function">
    <text evidence="1">Catalyzes the transfer of the diacylglyceryl group from phosphatidylglycerol to the sulfhydryl group of the N-terminal cysteine of a prolipoprotein, the first step in the formation of mature lipoproteins.</text>
</comment>
<comment type="catalytic activity">
    <reaction evidence="1">
        <text>L-cysteinyl-[prolipoprotein] + a 1,2-diacyl-sn-glycero-3-phospho-(1'-sn-glycerol) = an S-1,2-diacyl-sn-glyceryl-L-cysteinyl-[prolipoprotein] + sn-glycerol 1-phosphate + H(+)</text>
        <dbReference type="Rhea" id="RHEA:56712"/>
        <dbReference type="Rhea" id="RHEA-COMP:14679"/>
        <dbReference type="Rhea" id="RHEA-COMP:14680"/>
        <dbReference type="ChEBI" id="CHEBI:15378"/>
        <dbReference type="ChEBI" id="CHEBI:29950"/>
        <dbReference type="ChEBI" id="CHEBI:57685"/>
        <dbReference type="ChEBI" id="CHEBI:64716"/>
        <dbReference type="ChEBI" id="CHEBI:140658"/>
        <dbReference type="EC" id="2.5.1.145"/>
    </reaction>
</comment>
<comment type="pathway">
    <text evidence="1">Protein modification; lipoprotein biosynthesis (diacylglyceryl transfer).</text>
</comment>
<comment type="subcellular location">
    <subcellularLocation>
        <location evidence="1">Cell inner membrane</location>
        <topology evidence="1">Multi-pass membrane protein</topology>
    </subcellularLocation>
</comment>
<comment type="similarity">
    <text evidence="1 2">Belongs to the Lgt family.</text>
</comment>
<feature type="chain" id="PRO_0000172613" description="Phosphatidylglycerol--prolipoprotein diacylglyceryl transferase">
    <location>
        <begin position="1"/>
        <end position="284"/>
    </location>
</feature>
<feature type="transmembrane region" description="Helical" evidence="1">
    <location>
        <begin position="14"/>
        <end position="34"/>
    </location>
</feature>
<feature type="transmembrane region" description="Helical" evidence="1">
    <location>
        <begin position="62"/>
        <end position="82"/>
    </location>
</feature>
<feature type="transmembrane region" description="Helical" evidence="1">
    <location>
        <begin position="106"/>
        <end position="126"/>
    </location>
</feature>
<feature type="transmembrane region" description="Helical" evidence="1">
    <location>
        <begin position="136"/>
        <end position="156"/>
    </location>
</feature>
<feature type="transmembrane region" description="Helical" evidence="1">
    <location>
        <begin position="190"/>
        <end position="210"/>
    </location>
</feature>
<feature type="transmembrane region" description="Helical" evidence="1">
    <location>
        <begin position="218"/>
        <end position="238"/>
    </location>
</feature>
<feature type="transmembrane region" description="Helical" evidence="1">
    <location>
        <begin position="252"/>
        <end position="272"/>
    </location>
</feature>
<feature type="binding site" evidence="1">
    <location>
        <position position="155"/>
    </location>
    <ligand>
        <name>a 1,2-diacyl-sn-glycero-3-phospho-(1'-sn-glycerol)</name>
        <dbReference type="ChEBI" id="CHEBI:64716"/>
    </ligand>
</feature>
<feature type="sequence variant" description="In strain: HP439.">
    <original>S</original>
    <variation>G</variation>
    <location>
        <position position="20"/>
    </location>
</feature>
<feature type="sequence variant" description="In strain: HP439.">
    <original>A</original>
    <variation>V</variation>
    <location>
        <position position="31"/>
    </location>
</feature>
<feature type="sequence variant" description="In strain: HP439.">
    <original>I</original>
    <variation>V</variation>
    <location>
        <position position="76"/>
    </location>
</feature>
<feature type="sequence variant" description="In strain: HP439.">
    <original>G</original>
    <variation>S</variation>
    <location>
        <position position="87"/>
    </location>
</feature>
<feature type="sequence variant" description="In strain: HP439.">
    <original>M</original>
    <variation>I</variation>
    <location>
        <position position="182"/>
    </location>
</feature>
<feature type="sequence variant" description="In strain: HP500.">
    <original>I</original>
    <variation>V</variation>
    <location>
        <position position="202"/>
    </location>
</feature>
<feature type="sequence variant" description="In strain: HP500.">
    <original>H</original>
    <variation>N</variation>
    <location>
        <position position="217"/>
    </location>
</feature>
<feature type="sequence variant" description="In strain: HP500.">
    <original>I</original>
    <variation>V</variation>
    <location>
        <position position="264"/>
    </location>
</feature>
<reference key="1">
    <citation type="journal article" date="1997" name="Nature">
        <title>The complete genome sequence of the gastric pathogen Helicobacter pylori.</title>
        <authorList>
            <person name="Tomb J.-F."/>
            <person name="White O."/>
            <person name="Kerlavage A.R."/>
            <person name="Clayton R.A."/>
            <person name="Sutton G.G."/>
            <person name="Fleischmann R.D."/>
            <person name="Ketchum K.A."/>
            <person name="Klenk H.-P."/>
            <person name="Gill S.R."/>
            <person name="Dougherty B.A."/>
            <person name="Nelson K.E."/>
            <person name="Quackenbush J."/>
            <person name="Zhou L."/>
            <person name="Kirkness E.F."/>
            <person name="Peterson S.N."/>
            <person name="Loftus B.J."/>
            <person name="Richardson D.L."/>
            <person name="Dodson R.J."/>
            <person name="Khalak H.G."/>
            <person name="Glodek A."/>
            <person name="McKenney K."/>
            <person name="FitzGerald L.M."/>
            <person name="Lee N."/>
            <person name="Adams M.D."/>
            <person name="Hickey E.K."/>
            <person name="Berg D.E."/>
            <person name="Gocayne J.D."/>
            <person name="Utterback T.R."/>
            <person name="Peterson J.D."/>
            <person name="Kelley J.M."/>
            <person name="Cotton M.D."/>
            <person name="Weidman J.F."/>
            <person name="Fujii C."/>
            <person name="Bowman C."/>
            <person name="Watthey L."/>
            <person name="Wallin E."/>
            <person name="Hayes W.S."/>
            <person name="Borodovsky M."/>
            <person name="Karp P.D."/>
            <person name="Smith H.O."/>
            <person name="Fraser C.M."/>
            <person name="Venter J.C."/>
        </authorList>
    </citation>
    <scope>NUCLEOTIDE SEQUENCE [LARGE SCALE GENOMIC DNA]</scope>
    <source>
        <strain>ATCC 700392 / 26695</strain>
    </source>
</reference>
<reference key="2">
    <citation type="submission" date="1997-07" db="EMBL/GenBank/DDBJ databases">
        <authorList>
            <person name="Goodwin A."/>
            <person name="Berg D.E."/>
            <person name="Hoffman P.S."/>
        </authorList>
    </citation>
    <scope>NUCLEOTIDE SEQUENCE [GENOMIC DNA]</scope>
    <source>
        <strain>HP439</strain>
        <strain>HP500</strain>
    </source>
</reference>
<name>LGT_HELPY</name>
<keyword id="KW-0997">Cell inner membrane</keyword>
<keyword id="KW-1003">Cell membrane</keyword>
<keyword id="KW-0472">Membrane</keyword>
<keyword id="KW-1185">Reference proteome</keyword>
<keyword id="KW-0808">Transferase</keyword>
<keyword id="KW-0812">Transmembrane</keyword>
<keyword id="KW-1133">Transmembrane helix</keyword>
<evidence type="ECO:0000255" key="1">
    <source>
        <dbReference type="HAMAP-Rule" id="MF_01147"/>
    </source>
</evidence>
<evidence type="ECO:0000305" key="2"/>
<sequence>MNAWNTIYDQFNPIAFSLGSIEVHWYGLAYACAIVTAFYMALRMIQKDPKRFPIERKEFESYFLWAELGIVLGARIGYILIYEPNSGYYLTHFWQIFNPFDSHGNFVGIRGMSYHGGLVGFLIASYLYSRKDLKKLLIYLDLIAISLPLGYVFGRIGNFLNQELVGRIVPKDSHLGQIIGIMVDNELRYPSQLIEAFLEGVIVFLMVMWAKKHTKTHGLLIVVYGLGYSLMRFIAEFYREPDSQMGVYFLNLSMGQILSLFMVIVSLGILLYATKNSKKIKENQ</sequence>
<gene>
    <name evidence="1" type="primary">lgt</name>
    <name type="ordered locus">HP_0955</name>
</gene>
<protein>
    <recommendedName>
        <fullName evidence="1">Phosphatidylglycerol--prolipoprotein diacylglyceryl transferase</fullName>
        <ecNumber evidence="1">2.5.1.145</ecNumber>
    </recommendedName>
</protein>
<proteinExistence type="inferred from homology"/>
<dbReference type="EC" id="2.5.1.145" evidence="1"/>
<dbReference type="EMBL" id="AE000511">
    <property type="protein sequence ID" value="AAD07998.1"/>
    <property type="molecule type" value="Genomic_DNA"/>
</dbReference>
<dbReference type="EMBL" id="AF012552">
    <property type="protein sequence ID" value="AAC46348.1"/>
    <property type="molecule type" value="Genomic_DNA"/>
</dbReference>
<dbReference type="EMBL" id="AF012553">
    <property type="protein sequence ID" value="AAC46350.1"/>
    <property type="molecule type" value="Genomic_DNA"/>
</dbReference>
<dbReference type="PIR" id="C64639">
    <property type="entry name" value="C64639"/>
</dbReference>
<dbReference type="RefSeq" id="NP_207747.1">
    <property type="nucleotide sequence ID" value="NC_000915.1"/>
</dbReference>
<dbReference type="RefSeq" id="WP_000995079.1">
    <property type="nucleotide sequence ID" value="NC_018939.1"/>
</dbReference>
<dbReference type="SMR" id="O25609"/>
<dbReference type="FunCoup" id="O25609">
    <property type="interactions" value="197"/>
</dbReference>
<dbReference type="STRING" id="85962.HP_0955"/>
<dbReference type="PaxDb" id="85962-C694_04920"/>
<dbReference type="EnsemblBacteria" id="AAD07998">
    <property type="protein sequence ID" value="AAD07998"/>
    <property type="gene ID" value="HP_0955"/>
</dbReference>
<dbReference type="KEGG" id="heo:C694_04920"/>
<dbReference type="KEGG" id="hpy:HP_0955"/>
<dbReference type="PATRIC" id="fig|85962.47.peg.1023"/>
<dbReference type="eggNOG" id="COG0682">
    <property type="taxonomic scope" value="Bacteria"/>
</dbReference>
<dbReference type="InParanoid" id="O25609"/>
<dbReference type="OrthoDB" id="871140at2"/>
<dbReference type="PhylomeDB" id="O25609"/>
<dbReference type="UniPathway" id="UPA00664"/>
<dbReference type="Proteomes" id="UP000000429">
    <property type="component" value="Chromosome"/>
</dbReference>
<dbReference type="GO" id="GO:0005886">
    <property type="term" value="C:plasma membrane"/>
    <property type="evidence" value="ECO:0000318"/>
    <property type="project" value="GO_Central"/>
</dbReference>
<dbReference type="GO" id="GO:0008961">
    <property type="term" value="F:phosphatidylglycerol-prolipoprotein diacylglyceryl transferase activity"/>
    <property type="evidence" value="ECO:0000318"/>
    <property type="project" value="GO_Central"/>
</dbReference>
<dbReference type="GO" id="GO:0042158">
    <property type="term" value="P:lipoprotein biosynthetic process"/>
    <property type="evidence" value="ECO:0000318"/>
    <property type="project" value="GO_Central"/>
</dbReference>
<dbReference type="HAMAP" id="MF_01147">
    <property type="entry name" value="Lgt"/>
    <property type="match status" value="1"/>
</dbReference>
<dbReference type="InterPro" id="IPR001640">
    <property type="entry name" value="Lgt"/>
</dbReference>
<dbReference type="NCBIfam" id="TIGR00544">
    <property type="entry name" value="lgt"/>
    <property type="match status" value="1"/>
</dbReference>
<dbReference type="PANTHER" id="PTHR30589:SF0">
    <property type="entry name" value="PHOSPHATIDYLGLYCEROL--PROLIPOPROTEIN DIACYLGLYCERYL TRANSFERASE"/>
    <property type="match status" value="1"/>
</dbReference>
<dbReference type="PANTHER" id="PTHR30589">
    <property type="entry name" value="PROLIPOPROTEIN DIACYLGLYCERYL TRANSFERASE"/>
    <property type="match status" value="1"/>
</dbReference>
<dbReference type="Pfam" id="PF01790">
    <property type="entry name" value="LGT"/>
    <property type="match status" value="1"/>
</dbReference>
<dbReference type="PROSITE" id="PS01311">
    <property type="entry name" value="LGT"/>
    <property type="match status" value="1"/>
</dbReference>